<proteinExistence type="inferred from homology"/>
<gene>
    <name evidence="1" type="primary">argS</name>
    <name type="ordered locus">BP0115</name>
</gene>
<sequence length="560" mass="61387">MLLEQQKQLISLIQAAVAQCLPEAQAQVQLERPKVAAHGDIATNVAMQLAKPARRNPRELAQGIVDALMAQPQARELIQDAEIAGPGFINFRLTPAARQAVVQAVASQADAYGRAPRNGEKVLVEFVSANPTGPLHVGHARQAALGDAICRLYDASGWDVTREFYYNDAGNQIDNLAISVQARGRGIAPDAPDYPADGYKGDYIVEIARDFAARKSVQASDGQPVTATGDLDSLDDIRAFAVAYLRREQDLDLQAFGLAFDNYFLESSLYASGRVQETVDTLVAKGHTYEEGGALWLRTTELGTGDDKDRVMRKSEGGYTYFVPDVAYHKVKWERGFHHAVNIQGSDHHGTVARVRAGLQGLAGIPKDFPAYVLHKMVKVMRGGEEVKISKRAGSYVTMRDLIDWVGRDAVRYFLIQRRADTEFVFDIDLALSKSDENPVYYIQYAHARICTMIGNSGASAAEIAQADTALLTAPSEYALLQRLAEFPQVVALAAQELAPHHVAFWLRDCASDFHAWYNAERVLVDEPALKLARLRLAATTRQVLANGLALLGVSAPDRM</sequence>
<name>SYR_BORPE</name>
<evidence type="ECO:0000255" key="1">
    <source>
        <dbReference type="HAMAP-Rule" id="MF_00123"/>
    </source>
</evidence>
<evidence type="ECO:0000305" key="2"/>
<protein>
    <recommendedName>
        <fullName evidence="1">Arginine--tRNA ligase</fullName>
        <ecNumber evidence="1">6.1.1.19</ecNumber>
    </recommendedName>
    <alternativeName>
        <fullName evidence="1">Arginyl-tRNA synthetase</fullName>
        <shortName evidence="1">ArgRS</shortName>
    </alternativeName>
</protein>
<feature type="chain" id="PRO_0000151536" description="Arginine--tRNA ligase">
    <location>
        <begin position="1"/>
        <end position="560"/>
    </location>
</feature>
<feature type="short sequence motif" description="'HIGH' region">
    <location>
        <begin position="164"/>
        <end position="174"/>
    </location>
</feature>
<comment type="catalytic activity">
    <reaction evidence="1">
        <text>tRNA(Arg) + L-arginine + ATP = L-arginyl-tRNA(Arg) + AMP + diphosphate</text>
        <dbReference type="Rhea" id="RHEA:20301"/>
        <dbReference type="Rhea" id="RHEA-COMP:9658"/>
        <dbReference type="Rhea" id="RHEA-COMP:9673"/>
        <dbReference type="ChEBI" id="CHEBI:30616"/>
        <dbReference type="ChEBI" id="CHEBI:32682"/>
        <dbReference type="ChEBI" id="CHEBI:33019"/>
        <dbReference type="ChEBI" id="CHEBI:78442"/>
        <dbReference type="ChEBI" id="CHEBI:78513"/>
        <dbReference type="ChEBI" id="CHEBI:456215"/>
        <dbReference type="EC" id="6.1.1.19"/>
    </reaction>
</comment>
<comment type="subunit">
    <text evidence="1">Monomer.</text>
</comment>
<comment type="subcellular location">
    <subcellularLocation>
        <location evidence="1">Cytoplasm</location>
    </subcellularLocation>
</comment>
<comment type="similarity">
    <text evidence="1">Belongs to the class-I aminoacyl-tRNA synthetase family.</text>
</comment>
<comment type="sequence caution" evidence="2">
    <conflict type="erroneous initiation">
        <sequence resource="EMBL-CDS" id="CAE40495"/>
    </conflict>
</comment>
<organism>
    <name type="scientific">Bordetella pertussis (strain Tohama I / ATCC BAA-589 / NCTC 13251)</name>
    <dbReference type="NCBI Taxonomy" id="257313"/>
    <lineage>
        <taxon>Bacteria</taxon>
        <taxon>Pseudomonadati</taxon>
        <taxon>Pseudomonadota</taxon>
        <taxon>Betaproteobacteria</taxon>
        <taxon>Burkholderiales</taxon>
        <taxon>Alcaligenaceae</taxon>
        <taxon>Bordetella</taxon>
    </lineage>
</organism>
<dbReference type="EC" id="6.1.1.19" evidence="1"/>
<dbReference type="EMBL" id="BX640411">
    <property type="protein sequence ID" value="CAE40495.1"/>
    <property type="status" value="ALT_INIT"/>
    <property type="molecule type" value="Genomic_DNA"/>
</dbReference>
<dbReference type="RefSeq" id="NP_879017.1">
    <property type="nucleotide sequence ID" value="NC_002929.2"/>
</dbReference>
<dbReference type="RefSeq" id="WP_023853376.1">
    <property type="nucleotide sequence ID" value="NZ_CP039022.1"/>
</dbReference>
<dbReference type="SMR" id="Q7W0K0"/>
<dbReference type="STRING" id="257313.BP0115"/>
<dbReference type="PaxDb" id="257313-BP0115"/>
<dbReference type="GeneID" id="69603626"/>
<dbReference type="KEGG" id="bpe:BP0115"/>
<dbReference type="PATRIC" id="fig|257313.5.peg.117"/>
<dbReference type="eggNOG" id="COG0018">
    <property type="taxonomic scope" value="Bacteria"/>
</dbReference>
<dbReference type="HOGENOM" id="CLU_006406_0_1_4"/>
<dbReference type="Proteomes" id="UP000002676">
    <property type="component" value="Chromosome"/>
</dbReference>
<dbReference type="GO" id="GO:0005737">
    <property type="term" value="C:cytoplasm"/>
    <property type="evidence" value="ECO:0007669"/>
    <property type="project" value="UniProtKB-SubCell"/>
</dbReference>
<dbReference type="GO" id="GO:0004814">
    <property type="term" value="F:arginine-tRNA ligase activity"/>
    <property type="evidence" value="ECO:0007669"/>
    <property type="project" value="UniProtKB-UniRule"/>
</dbReference>
<dbReference type="GO" id="GO:0005524">
    <property type="term" value="F:ATP binding"/>
    <property type="evidence" value="ECO:0007669"/>
    <property type="project" value="UniProtKB-UniRule"/>
</dbReference>
<dbReference type="GO" id="GO:0006420">
    <property type="term" value="P:arginyl-tRNA aminoacylation"/>
    <property type="evidence" value="ECO:0007669"/>
    <property type="project" value="UniProtKB-UniRule"/>
</dbReference>
<dbReference type="CDD" id="cd07956">
    <property type="entry name" value="Anticodon_Ia_Arg"/>
    <property type="match status" value="1"/>
</dbReference>
<dbReference type="CDD" id="cd00671">
    <property type="entry name" value="ArgRS_core"/>
    <property type="match status" value="1"/>
</dbReference>
<dbReference type="FunFam" id="1.10.730.10:FF:000008">
    <property type="entry name" value="Arginine--tRNA ligase"/>
    <property type="match status" value="1"/>
</dbReference>
<dbReference type="FunFam" id="3.40.50.620:FF:000062">
    <property type="entry name" value="Arginine--tRNA ligase"/>
    <property type="match status" value="1"/>
</dbReference>
<dbReference type="Gene3D" id="3.30.1360.70">
    <property type="entry name" value="Arginyl tRNA synthetase N-terminal domain"/>
    <property type="match status" value="1"/>
</dbReference>
<dbReference type="Gene3D" id="3.40.50.620">
    <property type="entry name" value="HUPs"/>
    <property type="match status" value="1"/>
</dbReference>
<dbReference type="Gene3D" id="1.10.730.10">
    <property type="entry name" value="Isoleucyl-tRNA Synthetase, Domain 1"/>
    <property type="match status" value="1"/>
</dbReference>
<dbReference type="HAMAP" id="MF_00123">
    <property type="entry name" value="Arg_tRNA_synth"/>
    <property type="match status" value="1"/>
</dbReference>
<dbReference type="InterPro" id="IPR001412">
    <property type="entry name" value="aa-tRNA-synth_I_CS"/>
</dbReference>
<dbReference type="InterPro" id="IPR001278">
    <property type="entry name" value="Arg-tRNA-ligase"/>
</dbReference>
<dbReference type="InterPro" id="IPR005148">
    <property type="entry name" value="Arg-tRNA-synth_N"/>
</dbReference>
<dbReference type="InterPro" id="IPR036695">
    <property type="entry name" value="Arg-tRNA-synth_N_sf"/>
</dbReference>
<dbReference type="InterPro" id="IPR035684">
    <property type="entry name" value="ArgRS_core"/>
</dbReference>
<dbReference type="InterPro" id="IPR008909">
    <property type="entry name" value="DALR_anticod-bd"/>
</dbReference>
<dbReference type="InterPro" id="IPR014729">
    <property type="entry name" value="Rossmann-like_a/b/a_fold"/>
</dbReference>
<dbReference type="InterPro" id="IPR009080">
    <property type="entry name" value="tRNAsynth_Ia_anticodon-bd"/>
</dbReference>
<dbReference type="NCBIfam" id="TIGR00456">
    <property type="entry name" value="argS"/>
    <property type="match status" value="1"/>
</dbReference>
<dbReference type="PANTHER" id="PTHR11956:SF5">
    <property type="entry name" value="ARGININE--TRNA LIGASE, CYTOPLASMIC"/>
    <property type="match status" value="1"/>
</dbReference>
<dbReference type="PANTHER" id="PTHR11956">
    <property type="entry name" value="ARGINYL-TRNA SYNTHETASE"/>
    <property type="match status" value="1"/>
</dbReference>
<dbReference type="Pfam" id="PF03485">
    <property type="entry name" value="Arg_tRNA_synt_N"/>
    <property type="match status" value="1"/>
</dbReference>
<dbReference type="Pfam" id="PF05746">
    <property type="entry name" value="DALR_1"/>
    <property type="match status" value="1"/>
</dbReference>
<dbReference type="Pfam" id="PF00750">
    <property type="entry name" value="tRNA-synt_1d"/>
    <property type="match status" value="1"/>
</dbReference>
<dbReference type="PRINTS" id="PR01038">
    <property type="entry name" value="TRNASYNTHARG"/>
</dbReference>
<dbReference type="SMART" id="SM01016">
    <property type="entry name" value="Arg_tRNA_synt_N"/>
    <property type="match status" value="1"/>
</dbReference>
<dbReference type="SMART" id="SM00836">
    <property type="entry name" value="DALR_1"/>
    <property type="match status" value="1"/>
</dbReference>
<dbReference type="SUPFAM" id="SSF47323">
    <property type="entry name" value="Anticodon-binding domain of a subclass of class I aminoacyl-tRNA synthetases"/>
    <property type="match status" value="1"/>
</dbReference>
<dbReference type="SUPFAM" id="SSF55190">
    <property type="entry name" value="Arginyl-tRNA synthetase (ArgRS), N-terminal 'additional' domain"/>
    <property type="match status" value="1"/>
</dbReference>
<dbReference type="SUPFAM" id="SSF52374">
    <property type="entry name" value="Nucleotidylyl transferase"/>
    <property type="match status" value="1"/>
</dbReference>
<dbReference type="PROSITE" id="PS00178">
    <property type="entry name" value="AA_TRNA_LIGASE_I"/>
    <property type="match status" value="1"/>
</dbReference>
<accession>Q7W0K0</accession>
<reference key="1">
    <citation type="journal article" date="2003" name="Nat. Genet.">
        <title>Comparative analysis of the genome sequences of Bordetella pertussis, Bordetella parapertussis and Bordetella bronchiseptica.</title>
        <authorList>
            <person name="Parkhill J."/>
            <person name="Sebaihia M."/>
            <person name="Preston A."/>
            <person name="Murphy L.D."/>
            <person name="Thomson N.R."/>
            <person name="Harris D.E."/>
            <person name="Holden M.T.G."/>
            <person name="Churcher C.M."/>
            <person name="Bentley S.D."/>
            <person name="Mungall K.L."/>
            <person name="Cerdeno-Tarraga A.-M."/>
            <person name="Temple L."/>
            <person name="James K.D."/>
            <person name="Harris B."/>
            <person name="Quail M.A."/>
            <person name="Achtman M."/>
            <person name="Atkin R."/>
            <person name="Baker S."/>
            <person name="Basham D."/>
            <person name="Bason N."/>
            <person name="Cherevach I."/>
            <person name="Chillingworth T."/>
            <person name="Collins M."/>
            <person name="Cronin A."/>
            <person name="Davis P."/>
            <person name="Doggett J."/>
            <person name="Feltwell T."/>
            <person name="Goble A."/>
            <person name="Hamlin N."/>
            <person name="Hauser H."/>
            <person name="Holroyd S."/>
            <person name="Jagels K."/>
            <person name="Leather S."/>
            <person name="Moule S."/>
            <person name="Norberczak H."/>
            <person name="O'Neil S."/>
            <person name="Ormond D."/>
            <person name="Price C."/>
            <person name="Rabbinowitsch E."/>
            <person name="Rutter S."/>
            <person name="Sanders M."/>
            <person name="Saunders D."/>
            <person name="Seeger K."/>
            <person name="Sharp S."/>
            <person name="Simmonds M."/>
            <person name="Skelton J."/>
            <person name="Squares R."/>
            <person name="Squares S."/>
            <person name="Stevens K."/>
            <person name="Unwin L."/>
            <person name="Whitehead S."/>
            <person name="Barrell B.G."/>
            <person name="Maskell D.J."/>
        </authorList>
    </citation>
    <scope>NUCLEOTIDE SEQUENCE [LARGE SCALE GENOMIC DNA]</scope>
    <source>
        <strain>Tohama I / ATCC BAA-589 / NCTC 13251</strain>
    </source>
</reference>
<keyword id="KW-0030">Aminoacyl-tRNA synthetase</keyword>
<keyword id="KW-0067">ATP-binding</keyword>
<keyword id="KW-0963">Cytoplasm</keyword>
<keyword id="KW-0436">Ligase</keyword>
<keyword id="KW-0547">Nucleotide-binding</keyword>
<keyword id="KW-0648">Protein biosynthesis</keyword>
<keyword id="KW-1185">Reference proteome</keyword>